<organism>
    <name type="scientific">Campylobacter jejuni subsp. jejuni serotype O:6 (strain 81116 / NCTC 11828)</name>
    <dbReference type="NCBI Taxonomy" id="407148"/>
    <lineage>
        <taxon>Bacteria</taxon>
        <taxon>Pseudomonadati</taxon>
        <taxon>Campylobacterota</taxon>
        <taxon>Epsilonproteobacteria</taxon>
        <taxon>Campylobacterales</taxon>
        <taxon>Campylobacteraceae</taxon>
        <taxon>Campylobacter</taxon>
    </lineage>
</organism>
<gene>
    <name evidence="1" type="primary">purL</name>
    <name type="ordered locus">C8J_0897</name>
</gene>
<reference key="1">
    <citation type="journal article" date="2007" name="J. Bacteriol.">
        <title>The complete genome sequence of Campylobacter jejuni strain 81116 (NCTC11828).</title>
        <authorList>
            <person name="Pearson B.M."/>
            <person name="Gaskin D.J.H."/>
            <person name="Segers R.P.A.M."/>
            <person name="Wells J.M."/>
            <person name="Nuijten P.J.M."/>
            <person name="van Vliet A.H.M."/>
        </authorList>
    </citation>
    <scope>NUCLEOTIDE SEQUENCE [LARGE SCALE GENOMIC DNA]</scope>
    <source>
        <strain>81116 / NCTC 11828</strain>
    </source>
</reference>
<feature type="chain" id="PRO_1000072297" description="Phosphoribosylformylglycinamidine synthase subunit PurL">
    <location>
        <begin position="1"/>
        <end position="728"/>
    </location>
</feature>
<feature type="active site" evidence="1">
    <location>
        <position position="42"/>
    </location>
</feature>
<feature type="active site" description="Proton acceptor" evidence="1">
    <location>
        <position position="88"/>
    </location>
</feature>
<feature type="binding site" evidence="1">
    <location>
        <position position="45"/>
    </location>
    <ligand>
        <name>ATP</name>
        <dbReference type="ChEBI" id="CHEBI:30616"/>
    </ligand>
</feature>
<feature type="binding site" evidence="1">
    <location>
        <position position="84"/>
    </location>
    <ligand>
        <name>ATP</name>
        <dbReference type="ChEBI" id="CHEBI:30616"/>
    </ligand>
</feature>
<feature type="binding site" evidence="1">
    <location>
        <position position="86"/>
    </location>
    <ligand>
        <name>Mg(2+)</name>
        <dbReference type="ChEBI" id="CHEBI:18420"/>
        <label>1</label>
    </ligand>
</feature>
<feature type="binding site" evidence="1">
    <location>
        <begin position="87"/>
        <end position="90"/>
    </location>
    <ligand>
        <name>substrate</name>
    </ligand>
</feature>
<feature type="binding site" evidence="1">
    <location>
        <position position="109"/>
    </location>
    <ligand>
        <name>substrate</name>
    </ligand>
</feature>
<feature type="binding site" evidence="1">
    <location>
        <position position="110"/>
    </location>
    <ligand>
        <name>Mg(2+)</name>
        <dbReference type="ChEBI" id="CHEBI:18420"/>
        <label>2</label>
    </ligand>
</feature>
<feature type="binding site" evidence="1">
    <location>
        <position position="237"/>
    </location>
    <ligand>
        <name>substrate</name>
    </ligand>
</feature>
<feature type="binding site" evidence="1">
    <location>
        <position position="265"/>
    </location>
    <ligand>
        <name>Mg(2+)</name>
        <dbReference type="ChEBI" id="CHEBI:18420"/>
        <label>2</label>
    </ligand>
</feature>
<feature type="binding site" evidence="1">
    <location>
        <begin position="309"/>
        <end position="311"/>
    </location>
    <ligand>
        <name>substrate</name>
    </ligand>
</feature>
<feature type="binding site" evidence="1">
    <location>
        <position position="491"/>
    </location>
    <ligand>
        <name>ATP</name>
        <dbReference type="ChEBI" id="CHEBI:30616"/>
    </ligand>
</feature>
<feature type="binding site" evidence="1">
    <location>
        <position position="528"/>
    </location>
    <ligand>
        <name>ATP</name>
        <dbReference type="ChEBI" id="CHEBI:30616"/>
    </ligand>
</feature>
<feature type="binding site" evidence="1">
    <location>
        <position position="529"/>
    </location>
    <ligand>
        <name>Mg(2+)</name>
        <dbReference type="ChEBI" id="CHEBI:18420"/>
        <label>1</label>
    </ligand>
</feature>
<feature type="binding site" evidence="1">
    <location>
        <position position="531"/>
    </location>
    <ligand>
        <name>substrate</name>
    </ligand>
</feature>
<protein>
    <recommendedName>
        <fullName evidence="1">Phosphoribosylformylglycinamidine synthase subunit PurL</fullName>
        <shortName evidence="1">FGAM synthase</shortName>
        <ecNumber evidence="1">6.3.5.3</ecNumber>
    </recommendedName>
    <alternativeName>
        <fullName evidence="1">Formylglycinamide ribonucleotide amidotransferase subunit II</fullName>
        <shortName evidence="1">FGAR amidotransferase II</shortName>
        <shortName evidence="1">FGAR-AT II</shortName>
    </alternativeName>
    <alternativeName>
        <fullName evidence="1">Glutamine amidotransferase PurL</fullName>
    </alternativeName>
    <alternativeName>
        <fullName evidence="1">Phosphoribosylformylglycinamidine synthase subunit II</fullName>
    </alternativeName>
</protein>
<evidence type="ECO:0000255" key="1">
    <source>
        <dbReference type="HAMAP-Rule" id="MF_00420"/>
    </source>
</evidence>
<dbReference type="EC" id="6.3.5.3" evidence="1"/>
<dbReference type="EMBL" id="CP000814">
    <property type="protein sequence ID" value="ABV52496.1"/>
    <property type="molecule type" value="Genomic_DNA"/>
</dbReference>
<dbReference type="RefSeq" id="WP_002866893.1">
    <property type="nucleotide sequence ID" value="NC_009839.1"/>
</dbReference>
<dbReference type="SMR" id="A8FM09"/>
<dbReference type="KEGG" id="cju:C8J_0897"/>
<dbReference type="HOGENOM" id="CLU_003100_0_1_7"/>
<dbReference type="UniPathway" id="UPA00074">
    <property type="reaction ID" value="UER00128"/>
</dbReference>
<dbReference type="GO" id="GO:0005737">
    <property type="term" value="C:cytoplasm"/>
    <property type="evidence" value="ECO:0007669"/>
    <property type="project" value="UniProtKB-SubCell"/>
</dbReference>
<dbReference type="GO" id="GO:0005524">
    <property type="term" value="F:ATP binding"/>
    <property type="evidence" value="ECO:0007669"/>
    <property type="project" value="UniProtKB-UniRule"/>
</dbReference>
<dbReference type="GO" id="GO:0000287">
    <property type="term" value="F:magnesium ion binding"/>
    <property type="evidence" value="ECO:0007669"/>
    <property type="project" value="UniProtKB-UniRule"/>
</dbReference>
<dbReference type="GO" id="GO:0004642">
    <property type="term" value="F:phosphoribosylformylglycinamidine synthase activity"/>
    <property type="evidence" value="ECO:0007669"/>
    <property type="project" value="UniProtKB-UniRule"/>
</dbReference>
<dbReference type="GO" id="GO:0006189">
    <property type="term" value="P:'de novo' IMP biosynthetic process"/>
    <property type="evidence" value="ECO:0007669"/>
    <property type="project" value="UniProtKB-UniRule"/>
</dbReference>
<dbReference type="CDD" id="cd02203">
    <property type="entry name" value="PurL_repeat1"/>
    <property type="match status" value="1"/>
</dbReference>
<dbReference type="CDD" id="cd02204">
    <property type="entry name" value="PurL_repeat2"/>
    <property type="match status" value="1"/>
</dbReference>
<dbReference type="FunFam" id="3.30.1330.10:FF:000004">
    <property type="entry name" value="Phosphoribosylformylglycinamidine synthase subunit PurL"/>
    <property type="match status" value="1"/>
</dbReference>
<dbReference type="Gene3D" id="3.90.650.10">
    <property type="entry name" value="PurM-like C-terminal domain"/>
    <property type="match status" value="2"/>
</dbReference>
<dbReference type="Gene3D" id="3.30.1330.10">
    <property type="entry name" value="PurM-like, N-terminal domain"/>
    <property type="match status" value="2"/>
</dbReference>
<dbReference type="HAMAP" id="MF_00420">
    <property type="entry name" value="PurL_2"/>
    <property type="match status" value="1"/>
</dbReference>
<dbReference type="InterPro" id="IPR010074">
    <property type="entry name" value="PRibForGlyAmidine_synth_PurL"/>
</dbReference>
<dbReference type="InterPro" id="IPR041609">
    <property type="entry name" value="PurL_linker"/>
</dbReference>
<dbReference type="InterPro" id="IPR010918">
    <property type="entry name" value="PurM-like_C_dom"/>
</dbReference>
<dbReference type="InterPro" id="IPR036676">
    <property type="entry name" value="PurM-like_C_sf"/>
</dbReference>
<dbReference type="InterPro" id="IPR016188">
    <property type="entry name" value="PurM-like_N"/>
</dbReference>
<dbReference type="InterPro" id="IPR036921">
    <property type="entry name" value="PurM-like_N_sf"/>
</dbReference>
<dbReference type="NCBIfam" id="TIGR01736">
    <property type="entry name" value="FGAM_synth_II"/>
    <property type="match status" value="1"/>
</dbReference>
<dbReference type="NCBIfam" id="NF002290">
    <property type="entry name" value="PRK01213.1"/>
    <property type="match status" value="1"/>
</dbReference>
<dbReference type="PANTHER" id="PTHR43555">
    <property type="entry name" value="PHOSPHORIBOSYLFORMYLGLYCINAMIDINE SYNTHASE SUBUNIT PURL"/>
    <property type="match status" value="1"/>
</dbReference>
<dbReference type="PANTHER" id="PTHR43555:SF1">
    <property type="entry name" value="PHOSPHORIBOSYLFORMYLGLYCINAMIDINE SYNTHASE SUBUNIT PURL"/>
    <property type="match status" value="1"/>
</dbReference>
<dbReference type="Pfam" id="PF00586">
    <property type="entry name" value="AIRS"/>
    <property type="match status" value="2"/>
</dbReference>
<dbReference type="Pfam" id="PF02769">
    <property type="entry name" value="AIRS_C"/>
    <property type="match status" value="2"/>
</dbReference>
<dbReference type="Pfam" id="PF18072">
    <property type="entry name" value="FGAR-AT_linker"/>
    <property type="match status" value="1"/>
</dbReference>
<dbReference type="PIRSF" id="PIRSF001587">
    <property type="entry name" value="FGAM_synthase_II"/>
    <property type="match status" value="1"/>
</dbReference>
<dbReference type="SUPFAM" id="SSF56042">
    <property type="entry name" value="PurM C-terminal domain-like"/>
    <property type="match status" value="2"/>
</dbReference>
<dbReference type="SUPFAM" id="SSF55326">
    <property type="entry name" value="PurM N-terminal domain-like"/>
    <property type="match status" value="2"/>
</dbReference>
<name>PURL_CAMJ8</name>
<comment type="function">
    <text evidence="1">Part of the phosphoribosylformylglycinamidine synthase complex involved in the purines biosynthetic pathway. Catalyzes the ATP-dependent conversion of formylglycinamide ribonucleotide (FGAR) and glutamine to yield formylglycinamidine ribonucleotide (FGAM) and glutamate. The FGAM synthase complex is composed of three subunits. PurQ produces an ammonia molecule by converting glutamine to glutamate. PurL transfers the ammonia molecule to FGAR to form FGAM in an ATP-dependent manner. PurS interacts with PurQ and PurL and is thought to assist in the transfer of the ammonia molecule from PurQ to PurL.</text>
</comment>
<comment type="catalytic activity">
    <reaction evidence="1">
        <text>N(2)-formyl-N(1)-(5-phospho-beta-D-ribosyl)glycinamide + L-glutamine + ATP + H2O = 2-formamido-N(1)-(5-O-phospho-beta-D-ribosyl)acetamidine + L-glutamate + ADP + phosphate + H(+)</text>
        <dbReference type="Rhea" id="RHEA:17129"/>
        <dbReference type="ChEBI" id="CHEBI:15377"/>
        <dbReference type="ChEBI" id="CHEBI:15378"/>
        <dbReference type="ChEBI" id="CHEBI:29985"/>
        <dbReference type="ChEBI" id="CHEBI:30616"/>
        <dbReference type="ChEBI" id="CHEBI:43474"/>
        <dbReference type="ChEBI" id="CHEBI:58359"/>
        <dbReference type="ChEBI" id="CHEBI:147286"/>
        <dbReference type="ChEBI" id="CHEBI:147287"/>
        <dbReference type="ChEBI" id="CHEBI:456216"/>
        <dbReference type="EC" id="6.3.5.3"/>
    </reaction>
</comment>
<comment type="pathway">
    <text evidence="1">Purine metabolism; IMP biosynthesis via de novo pathway; 5-amino-1-(5-phospho-D-ribosyl)imidazole from N(2)-formyl-N(1)-(5-phospho-D-ribosyl)glycinamide: step 1/2.</text>
</comment>
<comment type="subunit">
    <text evidence="1">Monomer. Part of the FGAM synthase complex composed of 1 PurL, 1 PurQ and 2 PurS subunits.</text>
</comment>
<comment type="subcellular location">
    <subcellularLocation>
        <location evidence="1">Cytoplasm</location>
    </subcellularLocation>
</comment>
<comment type="similarity">
    <text evidence="1">Belongs to the FGAMS family.</text>
</comment>
<proteinExistence type="inferred from homology"/>
<keyword id="KW-0067">ATP-binding</keyword>
<keyword id="KW-0963">Cytoplasm</keyword>
<keyword id="KW-0436">Ligase</keyword>
<keyword id="KW-0460">Magnesium</keyword>
<keyword id="KW-0479">Metal-binding</keyword>
<keyword id="KW-0547">Nucleotide-binding</keyword>
<keyword id="KW-0658">Purine biosynthesis</keyword>
<accession>A8FM09</accession>
<sequence length="728" mass="79276">MDKETIKAHKISDEEYAQILEILGREPNLLELGVISAMWSEHCSYKSSKKYLNGFPTKAPWVIQGPGENAGVIDIGQGMAAVFKVESHNHPSFIEPFAGAATGVGGILRDVFTMGARVVAGLNSLKFGDIHDEKCGKHQKYLVKGVVNGISHYGNCMGVPTIGGECAFDECFNGNILVNAFALGVCKSEDIFYAKAEGVGNPVIYVGSKTGRDGLGGAVMASDSFNEESKSLRPTVQIGDPFSEKLLMEACLELFKTDYIVGIQDMGAAGLTSSSFEMAGRSGSGMKLYLDKTPMRESGMTPYELMLSESQERMLICAKKGYEDKVIEIFKKWDLDAVVMGEVTNTGKMELFWHDELVGLIPIEPLSEKAPILSRPTSEPKYLSEIKNYKFELKSSIQELFIQMLQNENINNKAFIYDQFDSSVQTNTIKADGKLGASVIRIKENGASVAMAIECNSRLNYVNPKIGAALAVASAGRKVACTGAKPLAISDCLNYGNPQNPEVMWQFAQGCEGIKEACKELNTPVVSGNVSLYNETEGVSIYPSPTIVSVGVLEDANKTLKASFEKENLSVYLLGESLGEFGGSMVMKIQDKKVSGSLKELDYKAELALWDLLYKANQNSLLECANSVGIGGIAMTLAKMFAISSVGANLTSDFDDEKMIFDESASRAIIGLSKENEEAFLNLAKEFGVKAYKLGVSTSQKHFKLDSIELSKAELDKLYFESFKEQIQ</sequence>